<name>RS20_WOLWR</name>
<sequence>MANHKSAKKMIKVIAKRTLINKMRKSKTRTSIRKLVDIIKSGDKENVVLAFRNAESNLHKCVNKGVIHRNTAARKISRLNAKVKALMTA</sequence>
<feature type="chain" id="PRO_1000194276" description="Small ribosomal subunit protein bS20">
    <location>
        <begin position="1"/>
        <end position="89"/>
    </location>
</feature>
<evidence type="ECO:0000255" key="1">
    <source>
        <dbReference type="HAMAP-Rule" id="MF_00500"/>
    </source>
</evidence>
<evidence type="ECO:0000305" key="2"/>
<accession>C0R453</accession>
<comment type="function">
    <text evidence="1">Binds directly to 16S ribosomal RNA.</text>
</comment>
<comment type="similarity">
    <text evidence="1">Belongs to the bacterial ribosomal protein bS20 family.</text>
</comment>
<organism>
    <name type="scientific">Wolbachia sp. subsp. Drosophila simulans (strain wRi)</name>
    <dbReference type="NCBI Taxonomy" id="66084"/>
    <lineage>
        <taxon>Bacteria</taxon>
        <taxon>Pseudomonadati</taxon>
        <taxon>Pseudomonadota</taxon>
        <taxon>Alphaproteobacteria</taxon>
        <taxon>Rickettsiales</taxon>
        <taxon>Anaplasmataceae</taxon>
        <taxon>Wolbachieae</taxon>
        <taxon>Wolbachia</taxon>
    </lineage>
</organism>
<dbReference type="EMBL" id="CP001391">
    <property type="protein sequence ID" value="ACN95695.1"/>
    <property type="molecule type" value="Genomic_DNA"/>
</dbReference>
<dbReference type="RefSeq" id="WP_012673338.1">
    <property type="nucleotide sequence ID" value="NZ_MKIF01000074.1"/>
</dbReference>
<dbReference type="SMR" id="C0R453"/>
<dbReference type="STRING" id="66084.WRi_009880"/>
<dbReference type="KEGG" id="wri:WRi_009880"/>
<dbReference type="HOGENOM" id="CLU_160655_3_0_5"/>
<dbReference type="Proteomes" id="UP000001293">
    <property type="component" value="Chromosome"/>
</dbReference>
<dbReference type="GO" id="GO:0005829">
    <property type="term" value="C:cytosol"/>
    <property type="evidence" value="ECO:0007669"/>
    <property type="project" value="TreeGrafter"/>
</dbReference>
<dbReference type="GO" id="GO:0015935">
    <property type="term" value="C:small ribosomal subunit"/>
    <property type="evidence" value="ECO:0007669"/>
    <property type="project" value="TreeGrafter"/>
</dbReference>
<dbReference type="GO" id="GO:0070181">
    <property type="term" value="F:small ribosomal subunit rRNA binding"/>
    <property type="evidence" value="ECO:0007669"/>
    <property type="project" value="TreeGrafter"/>
</dbReference>
<dbReference type="GO" id="GO:0003735">
    <property type="term" value="F:structural constituent of ribosome"/>
    <property type="evidence" value="ECO:0007669"/>
    <property type="project" value="InterPro"/>
</dbReference>
<dbReference type="GO" id="GO:0006412">
    <property type="term" value="P:translation"/>
    <property type="evidence" value="ECO:0007669"/>
    <property type="project" value="UniProtKB-UniRule"/>
</dbReference>
<dbReference type="FunFam" id="1.20.58.110:FF:000001">
    <property type="entry name" value="30S ribosomal protein S20"/>
    <property type="match status" value="1"/>
</dbReference>
<dbReference type="Gene3D" id="1.20.58.110">
    <property type="entry name" value="Ribosomal protein S20"/>
    <property type="match status" value="1"/>
</dbReference>
<dbReference type="HAMAP" id="MF_00500">
    <property type="entry name" value="Ribosomal_bS20"/>
    <property type="match status" value="1"/>
</dbReference>
<dbReference type="InterPro" id="IPR002583">
    <property type="entry name" value="Ribosomal_bS20"/>
</dbReference>
<dbReference type="InterPro" id="IPR036510">
    <property type="entry name" value="Ribosomal_bS20_sf"/>
</dbReference>
<dbReference type="NCBIfam" id="TIGR00029">
    <property type="entry name" value="S20"/>
    <property type="match status" value="1"/>
</dbReference>
<dbReference type="PANTHER" id="PTHR33398">
    <property type="entry name" value="30S RIBOSOMAL PROTEIN S20"/>
    <property type="match status" value="1"/>
</dbReference>
<dbReference type="PANTHER" id="PTHR33398:SF1">
    <property type="entry name" value="SMALL RIBOSOMAL SUBUNIT PROTEIN BS20C"/>
    <property type="match status" value="1"/>
</dbReference>
<dbReference type="Pfam" id="PF01649">
    <property type="entry name" value="Ribosomal_S20p"/>
    <property type="match status" value="1"/>
</dbReference>
<dbReference type="SUPFAM" id="SSF46992">
    <property type="entry name" value="Ribosomal protein S20"/>
    <property type="match status" value="1"/>
</dbReference>
<protein>
    <recommendedName>
        <fullName evidence="1">Small ribosomal subunit protein bS20</fullName>
    </recommendedName>
    <alternativeName>
        <fullName evidence="2">30S ribosomal protein S20</fullName>
    </alternativeName>
</protein>
<proteinExistence type="inferred from homology"/>
<reference key="1">
    <citation type="journal article" date="2009" name="Proc. Natl. Acad. Sci. U.S.A.">
        <title>The mosaic genome structure of the Wolbachia wRi strain infecting Drosophila simulans.</title>
        <authorList>
            <person name="Klasson L."/>
            <person name="Westberg J."/>
            <person name="Sapountzis P."/>
            <person name="Naeslund K."/>
            <person name="Lutnaes Y."/>
            <person name="Darby A.C."/>
            <person name="Veneti Z."/>
            <person name="Chen L."/>
            <person name="Braig H.R."/>
            <person name="Garrett R."/>
            <person name="Bourtzis K."/>
            <person name="Andersson S.G."/>
        </authorList>
    </citation>
    <scope>NUCLEOTIDE SEQUENCE [LARGE SCALE GENOMIC DNA]</scope>
    <source>
        <strain>wRi</strain>
    </source>
</reference>
<keyword id="KW-0687">Ribonucleoprotein</keyword>
<keyword id="KW-0689">Ribosomal protein</keyword>
<keyword id="KW-0694">RNA-binding</keyword>
<keyword id="KW-0699">rRNA-binding</keyword>
<gene>
    <name evidence="1" type="primary">rpsT</name>
    <name type="ordered locus">WRi_009880</name>
</gene>